<reference key="1">
    <citation type="submission" date="2007-06" db="EMBL/GenBank/DDBJ databases">
        <title>Complete sequence of Methanococcus vannielii SB.</title>
        <authorList>
            <consortium name="US DOE Joint Genome Institute"/>
            <person name="Copeland A."/>
            <person name="Lucas S."/>
            <person name="Lapidus A."/>
            <person name="Barry K."/>
            <person name="Glavina del Rio T."/>
            <person name="Dalin E."/>
            <person name="Tice H."/>
            <person name="Pitluck S."/>
            <person name="Chain P."/>
            <person name="Malfatti S."/>
            <person name="Shin M."/>
            <person name="Vergez L."/>
            <person name="Schmutz J."/>
            <person name="Larimer F."/>
            <person name="Land M."/>
            <person name="Hauser L."/>
            <person name="Kyrpides N."/>
            <person name="Anderson I."/>
            <person name="Sieprawska-Lupa M."/>
            <person name="Whitman W.B."/>
            <person name="Richardson P."/>
        </authorList>
    </citation>
    <scope>NUCLEOTIDE SEQUENCE [LARGE SCALE GENOMIC DNA]</scope>
    <source>
        <strain>ATCC 35089 / DSM 1224 / JCM 13029 / OCM 148 / SB</strain>
    </source>
</reference>
<protein>
    <recommendedName>
        <fullName evidence="1">Aspartyl/glutamyl-tRNA(Asn/Gln) amidotransferase subunit B</fullName>
        <shortName evidence="1">Asp/Glu-ADT subunit B</shortName>
        <ecNumber evidence="1">6.3.5.-</ecNumber>
    </recommendedName>
</protein>
<organism>
    <name type="scientific">Methanococcus vannielii (strain ATCC 35089 / DSM 1224 / JCM 13029 / OCM 148 / SB)</name>
    <dbReference type="NCBI Taxonomy" id="406327"/>
    <lineage>
        <taxon>Archaea</taxon>
        <taxon>Methanobacteriati</taxon>
        <taxon>Methanobacteriota</taxon>
        <taxon>Methanomada group</taxon>
        <taxon>Methanococci</taxon>
        <taxon>Methanococcales</taxon>
        <taxon>Methanococcaceae</taxon>
        <taxon>Methanococcus</taxon>
    </lineage>
</organism>
<gene>
    <name evidence="1" type="primary">gatB</name>
    <name type="ordered locus">Mevan_0243</name>
</gene>
<proteinExistence type="inferred from homology"/>
<evidence type="ECO:0000255" key="1">
    <source>
        <dbReference type="HAMAP-Rule" id="MF_00121"/>
    </source>
</evidence>
<name>GATB_METVS</name>
<keyword id="KW-0067">ATP-binding</keyword>
<keyword id="KW-0436">Ligase</keyword>
<keyword id="KW-0547">Nucleotide-binding</keyword>
<keyword id="KW-0648">Protein biosynthesis</keyword>
<feature type="chain" id="PRO_1000015998" description="Aspartyl/glutamyl-tRNA(Asn/Gln) amidotransferase subunit B">
    <location>
        <begin position="1"/>
        <end position="469"/>
    </location>
</feature>
<dbReference type="EC" id="6.3.5.-" evidence="1"/>
<dbReference type="EMBL" id="CP000742">
    <property type="protein sequence ID" value="ABR54152.1"/>
    <property type="molecule type" value="Genomic_DNA"/>
</dbReference>
<dbReference type="RefSeq" id="WP_011972055.1">
    <property type="nucleotide sequence ID" value="NC_009634.1"/>
</dbReference>
<dbReference type="SMR" id="A6UNT0"/>
<dbReference type="STRING" id="406327.Mevan_0243"/>
<dbReference type="GeneID" id="5324957"/>
<dbReference type="KEGG" id="mvn:Mevan_0243"/>
<dbReference type="eggNOG" id="arCOG01718">
    <property type="taxonomic scope" value="Archaea"/>
</dbReference>
<dbReference type="HOGENOM" id="CLU_019240_0_0_2"/>
<dbReference type="OrthoDB" id="52755at2157"/>
<dbReference type="Proteomes" id="UP000001107">
    <property type="component" value="Chromosome"/>
</dbReference>
<dbReference type="GO" id="GO:0050566">
    <property type="term" value="F:asparaginyl-tRNA synthase (glutamine-hydrolyzing) activity"/>
    <property type="evidence" value="ECO:0007669"/>
    <property type="project" value="RHEA"/>
</dbReference>
<dbReference type="GO" id="GO:0005524">
    <property type="term" value="F:ATP binding"/>
    <property type="evidence" value="ECO:0007669"/>
    <property type="project" value="UniProtKB-KW"/>
</dbReference>
<dbReference type="GO" id="GO:0050567">
    <property type="term" value="F:glutaminyl-tRNA synthase (glutamine-hydrolyzing) activity"/>
    <property type="evidence" value="ECO:0007669"/>
    <property type="project" value="UniProtKB-UniRule"/>
</dbReference>
<dbReference type="GO" id="GO:0070681">
    <property type="term" value="P:glutaminyl-tRNAGln biosynthesis via transamidation"/>
    <property type="evidence" value="ECO:0007669"/>
    <property type="project" value="TreeGrafter"/>
</dbReference>
<dbReference type="GO" id="GO:0006412">
    <property type="term" value="P:translation"/>
    <property type="evidence" value="ECO:0007669"/>
    <property type="project" value="UniProtKB-UniRule"/>
</dbReference>
<dbReference type="FunFam" id="1.10.10.410:FF:000001">
    <property type="entry name" value="Aspartyl/glutamyl-tRNA(Asn/Gln) amidotransferase subunit B"/>
    <property type="match status" value="1"/>
</dbReference>
<dbReference type="Gene3D" id="1.10.10.410">
    <property type="match status" value="1"/>
</dbReference>
<dbReference type="Gene3D" id="1.10.150.380">
    <property type="entry name" value="GatB domain, N-terminal subdomain"/>
    <property type="match status" value="1"/>
</dbReference>
<dbReference type="HAMAP" id="MF_00121">
    <property type="entry name" value="GatB"/>
    <property type="match status" value="1"/>
</dbReference>
<dbReference type="InterPro" id="IPR017959">
    <property type="entry name" value="Asn/Gln-tRNA_amidoTrfase_suB/E"/>
</dbReference>
<dbReference type="InterPro" id="IPR006075">
    <property type="entry name" value="Asn/Gln-tRNA_Trfase_suB/E_cat"/>
</dbReference>
<dbReference type="InterPro" id="IPR018027">
    <property type="entry name" value="Asn/Gln_amidotransferase"/>
</dbReference>
<dbReference type="InterPro" id="IPR003789">
    <property type="entry name" value="Asn/Gln_tRNA_amidoTrase-B-like"/>
</dbReference>
<dbReference type="InterPro" id="IPR004413">
    <property type="entry name" value="GatB"/>
</dbReference>
<dbReference type="InterPro" id="IPR042114">
    <property type="entry name" value="GatB_C_1"/>
</dbReference>
<dbReference type="InterPro" id="IPR023168">
    <property type="entry name" value="GatB_Yqey_C_2"/>
</dbReference>
<dbReference type="InterPro" id="IPR017958">
    <property type="entry name" value="Gln-tRNA_amidoTrfase_suB_CS"/>
</dbReference>
<dbReference type="InterPro" id="IPR014746">
    <property type="entry name" value="Gln_synth/guanido_kin_cat_dom"/>
</dbReference>
<dbReference type="NCBIfam" id="TIGR00133">
    <property type="entry name" value="gatB"/>
    <property type="match status" value="1"/>
</dbReference>
<dbReference type="NCBIfam" id="NF004012">
    <property type="entry name" value="PRK05477.1-2"/>
    <property type="match status" value="1"/>
</dbReference>
<dbReference type="NCBIfam" id="NF004014">
    <property type="entry name" value="PRK05477.1-4"/>
    <property type="match status" value="1"/>
</dbReference>
<dbReference type="PANTHER" id="PTHR11659">
    <property type="entry name" value="GLUTAMYL-TRNA GLN AMIDOTRANSFERASE SUBUNIT B MITOCHONDRIAL AND PROKARYOTIC PET112-RELATED"/>
    <property type="match status" value="1"/>
</dbReference>
<dbReference type="PANTHER" id="PTHR11659:SF0">
    <property type="entry name" value="GLUTAMYL-TRNA(GLN) AMIDOTRANSFERASE SUBUNIT B, MITOCHONDRIAL"/>
    <property type="match status" value="1"/>
</dbReference>
<dbReference type="Pfam" id="PF02934">
    <property type="entry name" value="GatB_N"/>
    <property type="match status" value="1"/>
</dbReference>
<dbReference type="Pfam" id="PF02637">
    <property type="entry name" value="GatB_Yqey"/>
    <property type="match status" value="1"/>
</dbReference>
<dbReference type="SMART" id="SM00845">
    <property type="entry name" value="GatB_Yqey"/>
    <property type="match status" value="1"/>
</dbReference>
<dbReference type="SUPFAM" id="SSF89095">
    <property type="entry name" value="GatB/YqeY motif"/>
    <property type="match status" value="1"/>
</dbReference>
<dbReference type="SUPFAM" id="SSF55931">
    <property type="entry name" value="Glutamine synthetase/guanido kinase"/>
    <property type="match status" value="1"/>
</dbReference>
<dbReference type="PROSITE" id="PS01234">
    <property type="entry name" value="GATB"/>
    <property type="match status" value="1"/>
</dbReference>
<sequence>MSDDLSMKCGLEIHVQVDTNSKLFCKCPTNYKDVFPNTNICPVCIGHPGAKPMPPNKKAFDIAIMVAKMLNCEMITDKDIYFQRKHYNYPDLPSGYQRTSVPIGEKGNFLGVGITEVHLEEDPGQYKPDLGTVDYNRSGTPLIEIVTDPDMKSPEEAREFLRQLMRLFRYIGNLRGEGTMRADTNISINYNGIQGKRVEVKNVNSIKGVYKVLKYEIIRQKNILRRGGEIKMETRAFMESQMITKSMRSKETADDYRYIPDPDLQPIVLDNSWIERVESEMPETPISKEKRFVEQYGIKEDDSKVLVSDLDLADVFERVIKDVGSDETGISLAVTWVRNELKRVLVYNKIDFFESNLKPEHIIELINSIKDRTISQKIGKTVIEHMVDQKGEKTPKELITELGLTVIEDVSELDQACEEAIKNSEKAIEDYKSGNIRALNSVVGQVMKLTKGRAEPGTVVEMLKKKIDG</sequence>
<accession>A6UNT0</accession>
<comment type="function">
    <text evidence="1">Allows the formation of correctly charged Asn-tRNA(Asn) or Gln-tRNA(Gln) through the transamidation of misacylated Asp-tRNA(Asn) or Glu-tRNA(Gln) in organisms which lack either or both of asparaginyl-tRNA or glutaminyl-tRNA synthetases. The reaction takes place in the presence of glutamine and ATP through an activated phospho-Asp-tRNA(Asn) or phospho-Glu-tRNA(Gln).</text>
</comment>
<comment type="catalytic activity">
    <reaction evidence="1">
        <text>L-glutamyl-tRNA(Gln) + L-glutamine + ATP + H2O = L-glutaminyl-tRNA(Gln) + L-glutamate + ADP + phosphate + H(+)</text>
        <dbReference type="Rhea" id="RHEA:17521"/>
        <dbReference type="Rhea" id="RHEA-COMP:9681"/>
        <dbReference type="Rhea" id="RHEA-COMP:9684"/>
        <dbReference type="ChEBI" id="CHEBI:15377"/>
        <dbReference type="ChEBI" id="CHEBI:15378"/>
        <dbReference type="ChEBI" id="CHEBI:29985"/>
        <dbReference type="ChEBI" id="CHEBI:30616"/>
        <dbReference type="ChEBI" id="CHEBI:43474"/>
        <dbReference type="ChEBI" id="CHEBI:58359"/>
        <dbReference type="ChEBI" id="CHEBI:78520"/>
        <dbReference type="ChEBI" id="CHEBI:78521"/>
        <dbReference type="ChEBI" id="CHEBI:456216"/>
    </reaction>
</comment>
<comment type="catalytic activity">
    <reaction evidence="1">
        <text>L-aspartyl-tRNA(Asn) + L-glutamine + ATP + H2O = L-asparaginyl-tRNA(Asn) + L-glutamate + ADP + phosphate + 2 H(+)</text>
        <dbReference type="Rhea" id="RHEA:14513"/>
        <dbReference type="Rhea" id="RHEA-COMP:9674"/>
        <dbReference type="Rhea" id="RHEA-COMP:9677"/>
        <dbReference type="ChEBI" id="CHEBI:15377"/>
        <dbReference type="ChEBI" id="CHEBI:15378"/>
        <dbReference type="ChEBI" id="CHEBI:29985"/>
        <dbReference type="ChEBI" id="CHEBI:30616"/>
        <dbReference type="ChEBI" id="CHEBI:43474"/>
        <dbReference type="ChEBI" id="CHEBI:58359"/>
        <dbReference type="ChEBI" id="CHEBI:78515"/>
        <dbReference type="ChEBI" id="CHEBI:78516"/>
        <dbReference type="ChEBI" id="CHEBI:456216"/>
    </reaction>
</comment>
<comment type="subunit">
    <text evidence="1">Heterotrimer of A, B and C subunits.</text>
</comment>
<comment type="similarity">
    <text evidence="1">Belongs to the GatB/GatE family. GatB subfamily.</text>
</comment>